<protein>
    <recommendedName>
        <fullName evidence="1">Pyridoxal 5'-phosphate synthase subunit PdxS</fullName>
        <shortName evidence="1">PLP synthase subunit PdxS</shortName>
        <ecNumber evidence="1">4.3.3.6</ecNumber>
    </recommendedName>
    <alternativeName>
        <fullName evidence="1">Pdx1</fullName>
    </alternativeName>
</protein>
<comment type="function">
    <text evidence="1">Catalyzes the formation of pyridoxal 5'-phosphate from ribose 5-phosphate (RBP), glyceraldehyde 3-phosphate (G3P) and ammonia. The ammonia is provided by the PdxT subunit. Can also use ribulose 5-phosphate and dihydroxyacetone phosphate as substrates, resulting from enzyme-catalyzed isomerization of RBP and G3P, respectively.</text>
</comment>
<comment type="catalytic activity">
    <reaction evidence="1">
        <text>aldehydo-D-ribose 5-phosphate + D-glyceraldehyde 3-phosphate + L-glutamine = pyridoxal 5'-phosphate + L-glutamate + phosphate + 3 H2O + H(+)</text>
        <dbReference type="Rhea" id="RHEA:31507"/>
        <dbReference type="ChEBI" id="CHEBI:15377"/>
        <dbReference type="ChEBI" id="CHEBI:15378"/>
        <dbReference type="ChEBI" id="CHEBI:29985"/>
        <dbReference type="ChEBI" id="CHEBI:43474"/>
        <dbReference type="ChEBI" id="CHEBI:58273"/>
        <dbReference type="ChEBI" id="CHEBI:58359"/>
        <dbReference type="ChEBI" id="CHEBI:59776"/>
        <dbReference type="ChEBI" id="CHEBI:597326"/>
        <dbReference type="EC" id="4.3.3.6"/>
    </reaction>
</comment>
<comment type="pathway">
    <text evidence="1">Cofactor biosynthesis; pyridoxal 5'-phosphate biosynthesis.</text>
</comment>
<comment type="subunit">
    <text evidence="1">In the presence of PdxT, forms a dodecamer of heterodimers.</text>
</comment>
<comment type="similarity">
    <text evidence="1">Belongs to the PdxS/SNZ family.</text>
</comment>
<dbReference type="EC" id="4.3.3.6" evidence="1"/>
<dbReference type="EMBL" id="LT708304">
    <property type="protein sequence ID" value="SIU01256.1"/>
    <property type="molecule type" value="Genomic_DNA"/>
</dbReference>
<dbReference type="RefSeq" id="NP_856284.1">
    <property type="nucleotide sequence ID" value="NC_002945.3"/>
</dbReference>
<dbReference type="RefSeq" id="WP_003413468.1">
    <property type="nucleotide sequence ID" value="NC_002945.4"/>
</dbReference>
<dbReference type="SMR" id="P60795"/>
<dbReference type="GeneID" id="45426609"/>
<dbReference type="KEGG" id="mbo:BQ2027_MB2638C"/>
<dbReference type="PATRIC" id="fig|233413.5.peg.2899"/>
<dbReference type="UniPathway" id="UPA00245"/>
<dbReference type="Proteomes" id="UP000001419">
    <property type="component" value="Chromosome"/>
</dbReference>
<dbReference type="GO" id="GO:0036381">
    <property type="term" value="F:pyridoxal 5'-phosphate synthase (glutamine hydrolysing) activity"/>
    <property type="evidence" value="ECO:0007669"/>
    <property type="project" value="UniProtKB-UniRule"/>
</dbReference>
<dbReference type="GO" id="GO:0006520">
    <property type="term" value="P:amino acid metabolic process"/>
    <property type="evidence" value="ECO:0007669"/>
    <property type="project" value="TreeGrafter"/>
</dbReference>
<dbReference type="GO" id="GO:0042823">
    <property type="term" value="P:pyridoxal phosphate biosynthetic process"/>
    <property type="evidence" value="ECO:0007669"/>
    <property type="project" value="UniProtKB-UniRule"/>
</dbReference>
<dbReference type="GO" id="GO:0008615">
    <property type="term" value="P:pyridoxine biosynthetic process"/>
    <property type="evidence" value="ECO:0007669"/>
    <property type="project" value="TreeGrafter"/>
</dbReference>
<dbReference type="CDD" id="cd04727">
    <property type="entry name" value="pdxS"/>
    <property type="match status" value="1"/>
</dbReference>
<dbReference type="FunFam" id="3.20.20.70:FF:000001">
    <property type="entry name" value="Pyridoxine biosynthesis protein PDX1"/>
    <property type="match status" value="1"/>
</dbReference>
<dbReference type="Gene3D" id="3.20.20.70">
    <property type="entry name" value="Aldolase class I"/>
    <property type="match status" value="1"/>
</dbReference>
<dbReference type="HAMAP" id="MF_01824">
    <property type="entry name" value="PdxS"/>
    <property type="match status" value="1"/>
</dbReference>
<dbReference type="InterPro" id="IPR013785">
    <property type="entry name" value="Aldolase_TIM"/>
</dbReference>
<dbReference type="InterPro" id="IPR001852">
    <property type="entry name" value="PdxS/SNZ"/>
</dbReference>
<dbReference type="InterPro" id="IPR033755">
    <property type="entry name" value="PdxS/SNZ_N"/>
</dbReference>
<dbReference type="InterPro" id="IPR011060">
    <property type="entry name" value="RibuloseP-bd_barrel"/>
</dbReference>
<dbReference type="NCBIfam" id="NF003215">
    <property type="entry name" value="PRK04180.1"/>
    <property type="match status" value="1"/>
</dbReference>
<dbReference type="NCBIfam" id="TIGR00343">
    <property type="entry name" value="pyridoxal 5'-phosphate synthase lyase subunit PdxS"/>
    <property type="match status" value="1"/>
</dbReference>
<dbReference type="PANTHER" id="PTHR31829">
    <property type="entry name" value="PYRIDOXAL 5'-PHOSPHATE SYNTHASE SUBUNIT SNZ1-RELATED"/>
    <property type="match status" value="1"/>
</dbReference>
<dbReference type="PANTHER" id="PTHR31829:SF0">
    <property type="entry name" value="PYRIDOXAL 5'-PHOSPHATE SYNTHASE SUBUNIT SNZ1-RELATED"/>
    <property type="match status" value="1"/>
</dbReference>
<dbReference type="Pfam" id="PF01680">
    <property type="entry name" value="SOR_SNZ"/>
    <property type="match status" value="1"/>
</dbReference>
<dbReference type="PIRSF" id="PIRSF029271">
    <property type="entry name" value="Pdx1"/>
    <property type="match status" value="1"/>
</dbReference>
<dbReference type="SUPFAM" id="SSF51366">
    <property type="entry name" value="Ribulose-phoshate binding barrel"/>
    <property type="match status" value="1"/>
</dbReference>
<dbReference type="PROSITE" id="PS01235">
    <property type="entry name" value="PDXS_SNZ_1"/>
    <property type="match status" value="1"/>
</dbReference>
<dbReference type="PROSITE" id="PS51129">
    <property type="entry name" value="PDXS_SNZ_2"/>
    <property type="match status" value="1"/>
</dbReference>
<name>PDXS_MYCBO</name>
<feature type="chain" id="PRO_0000109402" description="Pyridoxal 5'-phosphate synthase subunit PdxS">
    <location>
        <begin position="1"/>
        <end position="299"/>
    </location>
</feature>
<feature type="active site" description="Schiff-base intermediate with D-ribose 5-phosphate" evidence="1">
    <location>
        <position position="86"/>
    </location>
</feature>
<feature type="binding site" evidence="1">
    <location>
        <position position="29"/>
    </location>
    <ligand>
        <name>D-ribose 5-phosphate</name>
        <dbReference type="ChEBI" id="CHEBI:78346"/>
    </ligand>
</feature>
<feature type="binding site" evidence="1">
    <location>
        <position position="158"/>
    </location>
    <ligand>
        <name>D-ribose 5-phosphate</name>
        <dbReference type="ChEBI" id="CHEBI:78346"/>
    </ligand>
</feature>
<feature type="binding site" evidence="1">
    <location>
        <position position="170"/>
    </location>
    <ligand>
        <name>D-glyceraldehyde 3-phosphate</name>
        <dbReference type="ChEBI" id="CHEBI:59776"/>
    </ligand>
</feature>
<feature type="binding site" evidence="1">
    <location>
        <position position="219"/>
    </location>
    <ligand>
        <name>D-ribose 5-phosphate</name>
        <dbReference type="ChEBI" id="CHEBI:78346"/>
    </ligand>
</feature>
<feature type="binding site" evidence="1">
    <location>
        <begin position="240"/>
        <end position="241"/>
    </location>
    <ligand>
        <name>D-ribose 5-phosphate</name>
        <dbReference type="ChEBI" id="CHEBI:78346"/>
    </ligand>
</feature>
<reference key="1">
    <citation type="journal article" date="2003" name="Proc. Natl. Acad. Sci. U.S.A.">
        <title>The complete genome sequence of Mycobacterium bovis.</title>
        <authorList>
            <person name="Garnier T."/>
            <person name="Eiglmeier K."/>
            <person name="Camus J.-C."/>
            <person name="Medina N."/>
            <person name="Mansoor H."/>
            <person name="Pryor M."/>
            <person name="Duthoy S."/>
            <person name="Grondin S."/>
            <person name="Lacroix C."/>
            <person name="Monsempe C."/>
            <person name="Simon S."/>
            <person name="Harris B."/>
            <person name="Atkin R."/>
            <person name="Doggett J."/>
            <person name="Mayes R."/>
            <person name="Keating L."/>
            <person name="Wheeler P.R."/>
            <person name="Parkhill J."/>
            <person name="Barrell B.G."/>
            <person name="Cole S.T."/>
            <person name="Gordon S.V."/>
            <person name="Hewinson R.G."/>
        </authorList>
    </citation>
    <scope>NUCLEOTIDE SEQUENCE [LARGE SCALE GENOMIC DNA]</scope>
    <source>
        <strain>ATCC BAA-935 / AF2122/97</strain>
    </source>
</reference>
<reference key="2">
    <citation type="journal article" date="2017" name="Genome Announc.">
        <title>Updated reference genome sequence and annotation of Mycobacterium bovis AF2122/97.</title>
        <authorList>
            <person name="Malone K.M."/>
            <person name="Farrell D."/>
            <person name="Stuber T.P."/>
            <person name="Schubert O.T."/>
            <person name="Aebersold R."/>
            <person name="Robbe-Austerman S."/>
            <person name="Gordon S.V."/>
        </authorList>
    </citation>
    <scope>NUCLEOTIDE SEQUENCE [LARGE SCALE GENOMIC DNA]</scope>
    <scope>GENOME REANNOTATION</scope>
    <source>
        <strain>ATCC BAA-935 / AF2122/97</strain>
    </source>
</reference>
<accession>P60795</accession>
<accession>A0A1R3Y2I5</accession>
<accession>O06208</accession>
<accession>X2BKX8</accession>
<evidence type="ECO:0000255" key="1">
    <source>
        <dbReference type="HAMAP-Rule" id="MF_01824"/>
    </source>
</evidence>
<keyword id="KW-0456">Lyase</keyword>
<keyword id="KW-0663">Pyridoxal phosphate</keyword>
<keyword id="KW-1185">Reference proteome</keyword>
<keyword id="KW-0704">Schiff base</keyword>
<organism>
    <name type="scientific">Mycobacterium bovis (strain ATCC BAA-935 / AF2122/97)</name>
    <dbReference type="NCBI Taxonomy" id="233413"/>
    <lineage>
        <taxon>Bacteria</taxon>
        <taxon>Bacillati</taxon>
        <taxon>Actinomycetota</taxon>
        <taxon>Actinomycetes</taxon>
        <taxon>Mycobacteriales</taxon>
        <taxon>Mycobacteriaceae</taxon>
        <taxon>Mycobacterium</taxon>
        <taxon>Mycobacterium tuberculosis complex</taxon>
    </lineage>
</organism>
<gene>
    <name evidence="1" type="primary">pdxS</name>
    <name type="ordered locus">BQ2027_MB2638C</name>
</gene>
<sequence length="299" mass="31365">MDPAGNPATGTARVKRGMAEMLKGGVIMDVVTPEQARIAEGAGAVAVMALERVPADIRAQGGVSRMSDPDMIEGIIAAVTIPVMAKVRIGHFVEAQILQTLGVDYIDESEVLTPADYAHHIDKWNFTVPFVCGATNLGEALRRISEGAAMIRSKGEAGTGDVSNATTHMRAIGGEIRRLTSMSEDELFVAAKELQAPYELVAEVARAGKLPVTLFTAGGIATPADAAMMMQLGAEGVFVGSGIFKSGAPEHRAAAIVKATTFFDDPDVLAKVSRGLGEAMVGINVDEIAVGHRLAQRGW</sequence>
<proteinExistence type="inferred from homology"/>